<accession>A1RRS5</accession>
<proteinExistence type="inferred from homology"/>
<feature type="chain" id="PRO_1000046893" description="Large ribosomal subunit protein eL40">
    <location>
        <begin position="1"/>
        <end position="53"/>
    </location>
</feature>
<gene>
    <name evidence="1" type="primary">rpl40e</name>
    <name type="ordered locus">Pisl_0479</name>
</gene>
<sequence>MPITLDPEKLAIVMKHKFQYKICRECGARNPPDAEKCRRCRSRNLRPKKFKKK</sequence>
<evidence type="ECO:0000255" key="1">
    <source>
        <dbReference type="HAMAP-Rule" id="MF_00788"/>
    </source>
</evidence>
<evidence type="ECO:0000305" key="2"/>
<protein>
    <recommendedName>
        <fullName evidence="1">Large ribosomal subunit protein eL40</fullName>
    </recommendedName>
    <alternativeName>
        <fullName evidence="2">50S ribosomal protein L40e</fullName>
    </alternativeName>
</protein>
<organism>
    <name type="scientific">Pyrobaculum islandicum (strain DSM 4184 / JCM 9189 / GEO3)</name>
    <dbReference type="NCBI Taxonomy" id="384616"/>
    <lineage>
        <taxon>Archaea</taxon>
        <taxon>Thermoproteota</taxon>
        <taxon>Thermoprotei</taxon>
        <taxon>Thermoproteales</taxon>
        <taxon>Thermoproteaceae</taxon>
        <taxon>Pyrobaculum</taxon>
    </lineage>
</organism>
<dbReference type="EMBL" id="CP000504">
    <property type="protein sequence ID" value="ABL87657.1"/>
    <property type="molecule type" value="Genomic_DNA"/>
</dbReference>
<dbReference type="RefSeq" id="WP_011762234.1">
    <property type="nucleotide sequence ID" value="NC_008701.1"/>
</dbReference>
<dbReference type="SMR" id="A1RRS5"/>
<dbReference type="STRING" id="384616.Pisl_0479"/>
<dbReference type="GeneID" id="4617278"/>
<dbReference type="KEGG" id="pis:Pisl_0479"/>
<dbReference type="eggNOG" id="arCOG04049">
    <property type="taxonomic scope" value="Archaea"/>
</dbReference>
<dbReference type="HOGENOM" id="CLU_175093_1_0_2"/>
<dbReference type="OrthoDB" id="45138at2157"/>
<dbReference type="Proteomes" id="UP000002595">
    <property type="component" value="Chromosome"/>
</dbReference>
<dbReference type="GO" id="GO:1990904">
    <property type="term" value="C:ribonucleoprotein complex"/>
    <property type="evidence" value="ECO:0007669"/>
    <property type="project" value="UniProtKB-KW"/>
</dbReference>
<dbReference type="GO" id="GO:0005840">
    <property type="term" value="C:ribosome"/>
    <property type="evidence" value="ECO:0007669"/>
    <property type="project" value="UniProtKB-KW"/>
</dbReference>
<dbReference type="GO" id="GO:0003735">
    <property type="term" value="F:structural constituent of ribosome"/>
    <property type="evidence" value="ECO:0007669"/>
    <property type="project" value="InterPro"/>
</dbReference>
<dbReference type="GO" id="GO:0006412">
    <property type="term" value="P:translation"/>
    <property type="evidence" value="ECO:0007669"/>
    <property type="project" value="UniProtKB-UniRule"/>
</dbReference>
<dbReference type="Gene3D" id="4.10.1060.50">
    <property type="match status" value="1"/>
</dbReference>
<dbReference type="HAMAP" id="MF_00788">
    <property type="entry name" value="Ribosomal_eL40"/>
    <property type="match status" value="1"/>
</dbReference>
<dbReference type="InterPro" id="IPR023657">
    <property type="entry name" value="Ribosomal_eL40_arc"/>
</dbReference>
<dbReference type="InterPro" id="IPR001975">
    <property type="entry name" value="Ribosomal_eL40_dom"/>
</dbReference>
<dbReference type="InterPro" id="IPR038587">
    <property type="entry name" value="Ribosomal_eL40_sf"/>
</dbReference>
<dbReference type="InterPro" id="IPR011332">
    <property type="entry name" value="Ribosomal_zn-bd"/>
</dbReference>
<dbReference type="NCBIfam" id="NF003161">
    <property type="entry name" value="PRK04136.1"/>
    <property type="match status" value="1"/>
</dbReference>
<dbReference type="PANTHER" id="PTHR39649">
    <property type="entry name" value="50S RIBOSOMAL PROTEIN L40E"/>
    <property type="match status" value="1"/>
</dbReference>
<dbReference type="PANTHER" id="PTHR39649:SF1">
    <property type="entry name" value="LARGE RIBOSOMAL SUBUNIT PROTEIN EL40"/>
    <property type="match status" value="1"/>
</dbReference>
<dbReference type="Pfam" id="PF01020">
    <property type="entry name" value="Ribosomal_L40e"/>
    <property type="match status" value="1"/>
</dbReference>
<dbReference type="SMART" id="SM01377">
    <property type="entry name" value="Ribosomal_L40e"/>
    <property type="match status" value="1"/>
</dbReference>
<dbReference type="SUPFAM" id="SSF57829">
    <property type="entry name" value="Zn-binding ribosomal proteins"/>
    <property type="match status" value="1"/>
</dbReference>
<reference key="1">
    <citation type="submission" date="2006-12" db="EMBL/GenBank/DDBJ databases">
        <title>Complete sequence of Pyrobaculum islandicum DSM 4184.</title>
        <authorList>
            <person name="Copeland A."/>
            <person name="Lucas S."/>
            <person name="Lapidus A."/>
            <person name="Barry K."/>
            <person name="Detter J.C."/>
            <person name="Glavina del Rio T."/>
            <person name="Dalin E."/>
            <person name="Tice H."/>
            <person name="Pitluck S."/>
            <person name="Meincke L."/>
            <person name="Brettin T."/>
            <person name="Bruce D."/>
            <person name="Han C."/>
            <person name="Tapia R."/>
            <person name="Gilna P."/>
            <person name="Schmutz J."/>
            <person name="Larimer F."/>
            <person name="Land M."/>
            <person name="Hauser L."/>
            <person name="Kyrpides N."/>
            <person name="Mikhailova N."/>
            <person name="Cozen A.E."/>
            <person name="Fitz-Gibbon S.T."/>
            <person name="House C.H."/>
            <person name="Saltikov C."/>
            <person name="Lowe T."/>
            <person name="Richardson P."/>
        </authorList>
    </citation>
    <scope>NUCLEOTIDE SEQUENCE [LARGE SCALE GENOMIC DNA]</scope>
    <source>
        <strain>DSM 4184 / JCM 9189 / GEO3</strain>
    </source>
</reference>
<keyword id="KW-0687">Ribonucleoprotein</keyword>
<keyword id="KW-0689">Ribosomal protein</keyword>
<comment type="similarity">
    <text evidence="1">Belongs to the eukaryotic ribosomal protein eL40 family.</text>
</comment>
<name>RL40_PYRIL</name>